<reference key="1">
    <citation type="journal article" date="2009" name="PLoS Genet.">
        <title>Organised genome dynamics in the Escherichia coli species results in highly diverse adaptive paths.</title>
        <authorList>
            <person name="Touchon M."/>
            <person name="Hoede C."/>
            <person name="Tenaillon O."/>
            <person name="Barbe V."/>
            <person name="Baeriswyl S."/>
            <person name="Bidet P."/>
            <person name="Bingen E."/>
            <person name="Bonacorsi S."/>
            <person name="Bouchier C."/>
            <person name="Bouvet O."/>
            <person name="Calteau A."/>
            <person name="Chiapello H."/>
            <person name="Clermont O."/>
            <person name="Cruveiller S."/>
            <person name="Danchin A."/>
            <person name="Diard M."/>
            <person name="Dossat C."/>
            <person name="Karoui M.E."/>
            <person name="Frapy E."/>
            <person name="Garry L."/>
            <person name="Ghigo J.M."/>
            <person name="Gilles A.M."/>
            <person name="Johnson J."/>
            <person name="Le Bouguenec C."/>
            <person name="Lescat M."/>
            <person name="Mangenot S."/>
            <person name="Martinez-Jehanne V."/>
            <person name="Matic I."/>
            <person name="Nassif X."/>
            <person name="Oztas S."/>
            <person name="Petit M.A."/>
            <person name="Pichon C."/>
            <person name="Rouy Z."/>
            <person name="Ruf C.S."/>
            <person name="Schneider D."/>
            <person name="Tourret J."/>
            <person name="Vacherie B."/>
            <person name="Vallenet D."/>
            <person name="Medigue C."/>
            <person name="Rocha E.P.C."/>
            <person name="Denamur E."/>
        </authorList>
    </citation>
    <scope>NUCLEOTIDE SEQUENCE [LARGE SCALE GENOMIC DNA]</scope>
    <source>
        <strain>55989 / EAEC</strain>
    </source>
</reference>
<feature type="chain" id="PRO_1000186251" description="Thymidine phosphorylase">
    <location>
        <begin position="1"/>
        <end position="440"/>
    </location>
</feature>
<comment type="function">
    <text evidence="1">The enzymes which catalyze the reversible phosphorolysis of pyrimidine nucleosides are involved in the degradation of these compounds and in their utilization as carbon and energy sources, or in the rescue of pyrimidine bases for nucleotide synthesis.</text>
</comment>
<comment type="catalytic activity">
    <reaction evidence="1">
        <text>thymidine + phosphate = 2-deoxy-alpha-D-ribose 1-phosphate + thymine</text>
        <dbReference type="Rhea" id="RHEA:16037"/>
        <dbReference type="ChEBI" id="CHEBI:17748"/>
        <dbReference type="ChEBI" id="CHEBI:17821"/>
        <dbReference type="ChEBI" id="CHEBI:43474"/>
        <dbReference type="ChEBI" id="CHEBI:57259"/>
        <dbReference type="EC" id="2.4.2.4"/>
    </reaction>
</comment>
<comment type="pathway">
    <text evidence="1">Pyrimidine metabolism; dTMP biosynthesis via salvage pathway; dTMP from thymine: step 1/2.</text>
</comment>
<comment type="subunit">
    <text evidence="1">Homodimer.</text>
</comment>
<comment type="similarity">
    <text evidence="1">Belongs to the thymidine/pyrimidine-nucleoside phosphorylase family.</text>
</comment>
<keyword id="KW-0328">Glycosyltransferase</keyword>
<keyword id="KW-1185">Reference proteome</keyword>
<keyword id="KW-0808">Transferase</keyword>
<evidence type="ECO:0000255" key="1">
    <source>
        <dbReference type="HAMAP-Rule" id="MF_01628"/>
    </source>
</evidence>
<protein>
    <recommendedName>
        <fullName evidence="1">Thymidine phosphorylase</fullName>
        <ecNumber evidence="1">2.4.2.4</ecNumber>
    </recommendedName>
    <alternativeName>
        <fullName evidence="1">TdRPase</fullName>
    </alternativeName>
</protein>
<sequence length="440" mass="47166">MFLAQEIIRKKRDGHALSDEEIRFFINGIRDNTISEGQIAALAMTIFFHDMTMPERVSLTMAMRDSGTVLDWKSLHLNGPIVDKHSTGGVGDVTSLMLGPMVAACGGYIPMISGRGLGHTGGTLDKLESIPGFDIFPDDNRFREIIKDVGVAIIGQTSSLAPADKRFYATRDITATVDSIPLITASILAKKLAEGLDALVMDVKVGSGAFMPTYELSEALAEAIVGVANGAGVRTTALLTDMNQVLASSAGNAVEVREAVQFLTGEYRNPRLFDVTMALCVEMLISGKLAKDDAEARAKLQAVLDNGKAAEVFGRMVAAQKGPTDFVENYAKYLPTAMLTKAVYADTEGFVSEMDTRALGMAVVAMGGGRRQASDTIDYSVGFTDMARLGDQVDGQRPLAVIHAKDENSWQDAAKAVKAAIKLADKAPESTPTVYRRISE</sequence>
<dbReference type="EC" id="2.4.2.4" evidence="1"/>
<dbReference type="EMBL" id="CU928145">
    <property type="protein sequence ID" value="CAV02182.1"/>
    <property type="molecule type" value="Genomic_DNA"/>
</dbReference>
<dbReference type="RefSeq" id="WP_000477808.1">
    <property type="nucleotide sequence ID" value="NC_011748.1"/>
</dbReference>
<dbReference type="SMR" id="B7LEM8"/>
<dbReference type="GeneID" id="75202935"/>
<dbReference type="KEGG" id="eck:EC55989_5044"/>
<dbReference type="HOGENOM" id="CLU_025040_0_1_6"/>
<dbReference type="UniPathway" id="UPA00578">
    <property type="reaction ID" value="UER00638"/>
</dbReference>
<dbReference type="Proteomes" id="UP000000746">
    <property type="component" value="Chromosome"/>
</dbReference>
<dbReference type="GO" id="GO:0005829">
    <property type="term" value="C:cytosol"/>
    <property type="evidence" value="ECO:0007669"/>
    <property type="project" value="TreeGrafter"/>
</dbReference>
<dbReference type="GO" id="GO:0004645">
    <property type="term" value="F:1,4-alpha-oligoglucan phosphorylase activity"/>
    <property type="evidence" value="ECO:0007669"/>
    <property type="project" value="InterPro"/>
</dbReference>
<dbReference type="GO" id="GO:0009032">
    <property type="term" value="F:thymidine phosphorylase activity"/>
    <property type="evidence" value="ECO:0007669"/>
    <property type="project" value="UniProtKB-UniRule"/>
</dbReference>
<dbReference type="GO" id="GO:0006206">
    <property type="term" value="P:pyrimidine nucleobase metabolic process"/>
    <property type="evidence" value="ECO:0007669"/>
    <property type="project" value="InterPro"/>
</dbReference>
<dbReference type="GO" id="GO:0046104">
    <property type="term" value="P:thymidine metabolic process"/>
    <property type="evidence" value="ECO:0007669"/>
    <property type="project" value="UniProtKB-UniRule"/>
</dbReference>
<dbReference type="FunFam" id="3.40.1030.10:FF:000001">
    <property type="entry name" value="Thymidine phosphorylase"/>
    <property type="match status" value="1"/>
</dbReference>
<dbReference type="FunFam" id="3.90.1170.30:FF:000001">
    <property type="entry name" value="Thymidine phosphorylase"/>
    <property type="match status" value="1"/>
</dbReference>
<dbReference type="Gene3D" id="3.40.1030.10">
    <property type="entry name" value="Nucleoside phosphorylase/phosphoribosyltransferase catalytic domain"/>
    <property type="match status" value="1"/>
</dbReference>
<dbReference type="Gene3D" id="3.90.1170.30">
    <property type="entry name" value="Pyrimidine nucleoside phosphorylase-like, C-terminal domain"/>
    <property type="match status" value="1"/>
</dbReference>
<dbReference type="Gene3D" id="1.20.970.10">
    <property type="entry name" value="Transferase, Pyrimidine Nucleoside Phosphorylase, Chain C"/>
    <property type="match status" value="1"/>
</dbReference>
<dbReference type="HAMAP" id="MF_01628">
    <property type="entry name" value="Thymid_phosp"/>
    <property type="match status" value="1"/>
</dbReference>
<dbReference type="InterPro" id="IPR000312">
    <property type="entry name" value="Glycosyl_Trfase_fam3"/>
</dbReference>
<dbReference type="InterPro" id="IPR017459">
    <property type="entry name" value="Glycosyl_Trfase_fam3_N_dom"/>
</dbReference>
<dbReference type="InterPro" id="IPR036320">
    <property type="entry name" value="Glycosyl_Trfase_fam3_N_dom_sf"/>
</dbReference>
<dbReference type="InterPro" id="IPR035902">
    <property type="entry name" value="Nuc_phospho_transferase"/>
</dbReference>
<dbReference type="InterPro" id="IPR036566">
    <property type="entry name" value="PYNP-like_C_sf"/>
</dbReference>
<dbReference type="InterPro" id="IPR013102">
    <property type="entry name" value="PYNP_C"/>
</dbReference>
<dbReference type="InterPro" id="IPR018090">
    <property type="entry name" value="Pyrmidine_PPas_bac/euk"/>
</dbReference>
<dbReference type="InterPro" id="IPR017872">
    <property type="entry name" value="Pyrmidine_PPase_CS"/>
</dbReference>
<dbReference type="InterPro" id="IPR000053">
    <property type="entry name" value="Thymidine/pyrmidine_PPase"/>
</dbReference>
<dbReference type="InterPro" id="IPR013465">
    <property type="entry name" value="Thymidine_Pase"/>
</dbReference>
<dbReference type="NCBIfam" id="NF004490">
    <property type="entry name" value="PRK05820.1"/>
    <property type="match status" value="1"/>
</dbReference>
<dbReference type="NCBIfam" id="TIGR02643">
    <property type="entry name" value="T_phosphoryl"/>
    <property type="match status" value="1"/>
</dbReference>
<dbReference type="NCBIfam" id="TIGR02644">
    <property type="entry name" value="Y_phosphoryl"/>
    <property type="match status" value="1"/>
</dbReference>
<dbReference type="PANTHER" id="PTHR10515">
    <property type="entry name" value="THYMIDINE PHOSPHORYLASE"/>
    <property type="match status" value="1"/>
</dbReference>
<dbReference type="PANTHER" id="PTHR10515:SF0">
    <property type="entry name" value="THYMIDINE PHOSPHORYLASE"/>
    <property type="match status" value="1"/>
</dbReference>
<dbReference type="Pfam" id="PF02885">
    <property type="entry name" value="Glycos_trans_3N"/>
    <property type="match status" value="1"/>
</dbReference>
<dbReference type="Pfam" id="PF00591">
    <property type="entry name" value="Glycos_transf_3"/>
    <property type="match status" value="1"/>
</dbReference>
<dbReference type="Pfam" id="PF07831">
    <property type="entry name" value="PYNP_C"/>
    <property type="match status" value="1"/>
</dbReference>
<dbReference type="PIRSF" id="PIRSF000478">
    <property type="entry name" value="TP_PyNP"/>
    <property type="match status" value="1"/>
</dbReference>
<dbReference type="SMART" id="SM00941">
    <property type="entry name" value="PYNP_C"/>
    <property type="match status" value="1"/>
</dbReference>
<dbReference type="SUPFAM" id="SSF52418">
    <property type="entry name" value="Nucleoside phosphorylase/phosphoribosyltransferase catalytic domain"/>
    <property type="match status" value="1"/>
</dbReference>
<dbReference type="SUPFAM" id="SSF47648">
    <property type="entry name" value="Nucleoside phosphorylase/phosphoribosyltransferase N-terminal domain"/>
    <property type="match status" value="1"/>
</dbReference>
<dbReference type="SUPFAM" id="SSF54680">
    <property type="entry name" value="Pyrimidine nucleoside phosphorylase C-terminal domain"/>
    <property type="match status" value="1"/>
</dbReference>
<dbReference type="PROSITE" id="PS00647">
    <property type="entry name" value="THYMID_PHOSPHORYLASE"/>
    <property type="match status" value="1"/>
</dbReference>
<name>TYPH_ECO55</name>
<accession>B7LEM8</accession>
<organism>
    <name type="scientific">Escherichia coli (strain 55989 / EAEC)</name>
    <dbReference type="NCBI Taxonomy" id="585055"/>
    <lineage>
        <taxon>Bacteria</taxon>
        <taxon>Pseudomonadati</taxon>
        <taxon>Pseudomonadota</taxon>
        <taxon>Gammaproteobacteria</taxon>
        <taxon>Enterobacterales</taxon>
        <taxon>Enterobacteriaceae</taxon>
        <taxon>Escherichia</taxon>
    </lineage>
</organism>
<gene>
    <name evidence="1" type="primary">deoA</name>
    <name type="ordered locus">EC55989_5044</name>
</gene>
<proteinExistence type="inferred from homology"/>